<reference key="1">
    <citation type="journal article" date="2008" name="Genomics">
        <title>Characterization of ST-4821 complex, a unique Neisseria meningitidis clone.</title>
        <authorList>
            <person name="Peng J."/>
            <person name="Yang L."/>
            <person name="Yang F."/>
            <person name="Yang J."/>
            <person name="Yan Y."/>
            <person name="Nie H."/>
            <person name="Zhang X."/>
            <person name="Xiong Z."/>
            <person name="Jiang Y."/>
            <person name="Cheng F."/>
            <person name="Xu X."/>
            <person name="Chen S."/>
            <person name="Sun L."/>
            <person name="Li W."/>
            <person name="Shen Y."/>
            <person name="Shao Z."/>
            <person name="Liang X."/>
            <person name="Xu J."/>
            <person name="Jin Q."/>
        </authorList>
    </citation>
    <scope>NUCLEOTIDE SEQUENCE [LARGE SCALE GENOMIC DNA]</scope>
    <source>
        <strain>053442</strain>
    </source>
</reference>
<organism>
    <name type="scientific">Neisseria meningitidis serogroup C (strain 053442)</name>
    <dbReference type="NCBI Taxonomy" id="374833"/>
    <lineage>
        <taxon>Bacteria</taxon>
        <taxon>Pseudomonadati</taxon>
        <taxon>Pseudomonadota</taxon>
        <taxon>Betaproteobacteria</taxon>
        <taxon>Neisseriales</taxon>
        <taxon>Neisseriaceae</taxon>
        <taxon>Neisseria</taxon>
    </lineage>
</organism>
<accession>A9M3V5</accession>
<feature type="chain" id="PRO_1000086486" description="Large ribosomal subunit protein uL24">
    <location>
        <begin position="1"/>
        <end position="107"/>
    </location>
</feature>
<name>RL24_NEIM0</name>
<protein>
    <recommendedName>
        <fullName evidence="1">Large ribosomal subunit protein uL24</fullName>
    </recommendedName>
    <alternativeName>
        <fullName evidence="2">50S ribosomal protein L24</fullName>
    </alternativeName>
</protein>
<dbReference type="EMBL" id="CP000381">
    <property type="protein sequence ID" value="ABX74118.1"/>
    <property type="molecule type" value="Genomic_DNA"/>
</dbReference>
<dbReference type="RefSeq" id="WP_002215435.1">
    <property type="nucleotide sequence ID" value="NC_010120.1"/>
</dbReference>
<dbReference type="SMR" id="A9M3V5"/>
<dbReference type="GeneID" id="93387228"/>
<dbReference type="KEGG" id="nmn:NMCC_1995"/>
<dbReference type="HOGENOM" id="CLU_093315_2_2_4"/>
<dbReference type="Proteomes" id="UP000001177">
    <property type="component" value="Chromosome"/>
</dbReference>
<dbReference type="GO" id="GO:1990904">
    <property type="term" value="C:ribonucleoprotein complex"/>
    <property type="evidence" value="ECO:0007669"/>
    <property type="project" value="UniProtKB-KW"/>
</dbReference>
<dbReference type="GO" id="GO:0005840">
    <property type="term" value="C:ribosome"/>
    <property type="evidence" value="ECO:0007669"/>
    <property type="project" value="UniProtKB-KW"/>
</dbReference>
<dbReference type="GO" id="GO:0019843">
    <property type="term" value="F:rRNA binding"/>
    <property type="evidence" value="ECO:0007669"/>
    <property type="project" value="UniProtKB-UniRule"/>
</dbReference>
<dbReference type="GO" id="GO:0003735">
    <property type="term" value="F:structural constituent of ribosome"/>
    <property type="evidence" value="ECO:0007669"/>
    <property type="project" value="InterPro"/>
</dbReference>
<dbReference type="GO" id="GO:0006412">
    <property type="term" value="P:translation"/>
    <property type="evidence" value="ECO:0007669"/>
    <property type="project" value="UniProtKB-UniRule"/>
</dbReference>
<dbReference type="CDD" id="cd06089">
    <property type="entry name" value="KOW_RPL26"/>
    <property type="match status" value="1"/>
</dbReference>
<dbReference type="FunFam" id="2.30.30.30:FF:000004">
    <property type="entry name" value="50S ribosomal protein L24"/>
    <property type="match status" value="1"/>
</dbReference>
<dbReference type="Gene3D" id="2.30.30.30">
    <property type="match status" value="1"/>
</dbReference>
<dbReference type="HAMAP" id="MF_01326_B">
    <property type="entry name" value="Ribosomal_uL24_B"/>
    <property type="match status" value="1"/>
</dbReference>
<dbReference type="InterPro" id="IPR005824">
    <property type="entry name" value="KOW"/>
</dbReference>
<dbReference type="InterPro" id="IPR014722">
    <property type="entry name" value="Rib_uL2_dom2"/>
</dbReference>
<dbReference type="InterPro" id="IPR003256">
    <property type="entry name" value="Ribosomal_uL24"/>
</dbReference>
<dbReference type="InterPro" id="IPR005825">
    <property type="entry name" value="Ribosomal_uL24_CS"/>
</dbReference>
<dbReference type="InterPro" id="IPR041988">
    <property type="entry name" value="Ribosomal_uL24_KOW"/>
</dbReference>
<dbReference type="InterPro" id="IPR008991">
    <property type="entry name" value="Translation_prot_SH3-like_sf"/>
</dbReference>
<dbReference type="NCBIfam" id="TIGR01079">
    <property type="entry name" value="rplX_bact"/>
    <property type="match status" value="1"/>
</dbReference>
<dbReference type="PANTHER" id="PTHR12903">
    <property type="entry name" value="MITOCHONDRIAL RIBOSOMAL PROTEIN L24"/>
    <property type="match status" value="1"/>
</dbReference>
<dbReference type="Pfam" id="PF00467">
    <property type="entry name" value="KOW"/>
    <property type="match status" value="1"/>
</dbReference>
<dbReference type="Pfam" id="PF17136">
    <property type="entry name" value="ribosomal_L24"/>
    <property type="match status" value="1"/>
</dbReference>
<dbReference type="SMART" id="SM00739">
    <property type="entry name" value="KOW"/>
    <property type="match status" value="1"/>
</dbReference>
<dbReference type="SUPFAM" id="SSF50104">
    <property type="entry name" value="Translation proteins SH3-like domain"/>
    <property type="match status" value="1"/>
</dbReference>
<dbReference type="PROSITE" id="PS01108">
    <property type="entry name" value="RIBOSOMAL_L24"/>
    <property type="match status" value="1"/>
</dbReference>
<keyword id="KW-0687">Ribonucleoprotein</keyword>
<keyword id="KW-0689">Ribosomal protein</keyword>
<keyword id="KW-0694">RNA-binding</keyword>
<keyword id="KW-0699">rRNA-binding</keyword>
<evidence type="ECO:0000255" key="1">
    <source>
        <dbReference type="HAMAP-Rule" id="MF_01326"/>
    </source>
</evidence>
<evidence type="ECO:0000305" key="2"/>
<sequence length="107" mass="11667">MNKIIKGDRVVVIAGKDKGKQGQVVRVLGDKVVVEGVNVVKRHQKPNPMRGIEGGIITKEMPLDISNIAILNPETNKADRVGIKLIENEGKVKRVRFFKSNGSIIGA</sequence>
<proteinExistence type="inferred from homology"/>
<gene>
    <name evidence="1" type="primary">rplX</name>
    <name type="ordered locus">NMCC_1995</name>
</gene>
<comment type="function">
    <text evidence="1">One of two assembly initiator proteins, it binds directly to the 5'-end of the 23S rRNA, where it nucleates assembly of the 50S subunit.</text>
</comment>
<comment type="function">
    <text evidence="1">One of the proteins that surrounds the polypeptide exit tunnel on the outside of the subunit.</text>
</comment>
<comment type="subunit">
    <text evidence="1">Part of the 50S ribosomal subunit.</text>
</comment>
<comment type="similarity">
    <text evidence="1">Belongs to the universal ribosomal protein uL24 family.</text>
</comment>